<feature type="chain" id="PRO_0000434459" description="UDP-glycosyltransferase 71K1">
    <location>
        <begin position="1"/>
        <end position="477"/>
    </location>
</feature>
<feature type="binding site" evidence="1">
    <location>
        <position position="285"/>
    </location>
    <ligand>
        <name>UDP-alpha-D-glucose</name>
        <dbReference type="ChEBI" id="CHEBI:58885"/>
    </ligand>
</feature>
<feature type="binding site" evidence="1">
    <location>
        <begin position="350"/>
        <end position="351"/>
    </location>
    <ligand>
        <name>UDP-alpha-D-glucose</name>
        <dbReference type="ChEBI" id="CHEBI:58885"/>
    </ligand>
</feature>
<feature type="binding site" evidence="1">
    <location>
        <begin position="368"/>
        <end position="376"/>
    </location>
    <ligand>
        <name>UDP-alpha-D-glucose</name>
        <dbReference type="ChEBI" id="CHEBI:58885"/>
    </ligand>
</feature>
<feature type="binding site" evidence="1">
    <location>
        <begin position="390"/>
        <end position="393"/>
    </location>
    <ligand>
        <name>UDP-alpha-D-glucose</name>
        <dbReference type="ChEBI" id="CHEBI:58885"/>
    </ligand>
</feature>
<protein>
    <recommendedName>
        <fullName evidence="3">UDP-glycosyltransferase 71K1</fullName>
        <ecNumber evidence="4">2.4.1.-</ecNumber>
    </recommendedName>
    <alternativeName>
        <fullName evidence="4">UDP-glucose:chalcone 2'-O-glucosyltransferase</fullName>
    </alternativeName>
    <alternativeName>
        <fullName evidence="4">UDP-glucose:flavonol 2'-O-glucosyltransferase</fullName>
    </alternativeName>
</protein>
<reference key="1">
    <citation type="journal article" date="2010" name="Plant Sci.">
        <title>Cloning and heterologous expression of glycosyltransferases from Malus x domestica and Pyrus communis, which convert phloretin to phloretin 2'-O-glucoside (phloridzin).</title>
        <authorList>
            <person name="Gosch C."/>
            <person name="Halbwirth H."/>
            <person name="Schneider B."/>
            <person name="Holscher D."/>
            <person name="Stich K."/>
        </authorList>
    </citation>
    <scope>NUCLEOTIDE SEQUENCE [MRNA]</scope>
    <scope>FUNCTION</scope>
    <scope>BIOPHYSICOCHEMICAL PROPERTIES</scope>
    <source>
        <strain>cv. Rebella</strain>
    </source>
</reference>
<organism>
    <name type="scientific">Malus domestica</name>
    <name type="common">Apple</name>
    <name type="synonym">Pyrus malus</name>
    <dbReference type="NCBI Taxonomy" id="3750"/>
    <lineage>
        <taxon>Eukaryota</taxon>
        <taxon>Viridiplantae</taxon>
        <taxon>Streptophyta</taxon>
        <taxon>Embryophyta</taxon>
        <taxon>Tracheophyta</taxon>
        <taxon>Spermatophyta</taxon>
        <taxon>Magnoliopsida</taxon>
        <taxon>eudicotyledons</taxon>
        <taxon>Gunneridae</taxon>
        <taxon>Pentapetalae</taxon>
        <taxon>rosids</taxon>
        <taxon>fabids</taxon>
        <taxon>Rosales</taxon>
        <taxon>Rosaceae</taxon>
        <taxon>Amygdaloideae</taxon>
        <taxon>Maleae</taxon>
        <taxon>Malus</taxon>
    </lineage>
</organism>
<name>U71K1_MALDO</name>
<proteinExistence type="evidence at protein level"/>
<evidence type="ECO:0000250" key="1">
    <source>
        <dbReference type="UniProtKB" id="Q9M156"/>
    </source>
</evidence>
<evidence type="ECO:0000269" key="2">
    <source ref="1"/>
</evidence>
<evidence type="ECO:0000303" key="3">
    <source ref="1"/>
</evidence>
<evidence type="ECO:0000305" key="4"/>
<dbReference type="EC" id="2.4.1.-" evidence="4"/>
<dbReference type="EMBL" id="FJ854493">
    <property type="protein sequence ID" value="ACZ44835.1"/>
    <property type="molecule type" value="mRNA"/>
</dbReference>
<dbReference type="RefSeq" id="NP_001280899.1">
    <property type="nucleotide sequence ID" value="NM_001293970.1"/>
</dbReference>
<dbReference type="SMR" id="D3UAG0"/>
<dbReference type="CAZy" id="GT1">
    <property type="family name" value="Glycosyltransferase Family 1"/>
</dbReference>
<dbReference type="GeneID" id="103447413"/>
<dbReference type="KEGG" id="mdm:103447413"/>
<dbReference type="OrthoDB" id="5835829at2759"/>
<dbReference type="GO" id="GO:0035251">
    <property type="term" value="F:UDP-glucosyltransferase activity"/>
    <property type="evidence" value="ECO:0000314"/>
    <property type="project" value="UniProtKB"/>
</dbReference>
<dbReference type="CDD" id="cd03784">
    <property type="entry name" value="GT1_Gtf-like"/>
    <property type="match status" value="1"/>
</dbReference>
<dbReference type="FunFam" id="3.40.50.2000:FF:000056">
    <property type="entry name" value="Glycosyltransferase"/>
    <property type="match status" value="1"/>
</dbReference>
<dbReference type="FunFam" id="3.40.50.2000:FF:000080">
    <property type="entry name" value="Glycosyltransferase"/>
    <property type="match status" value="1"/>
</dbReference>
<dbReference type="Gene3D" id="3.40.50.2000">
    <property type="entry name" value="Glycogen Phosphorylase B"/>
    <property type="match status" value="2"/>
</dbReference>
<dbReference type="InterPro" id="IPR050481">
    <property type="entry name" value="UDP-glycosyltransf_plant"/>
</dbReference>
<dbReference type="InterPro" id="IPR002213">
    <property type="entry name" value="UDP_glucos_trans"/>
</dbReference>
<dbReference type="InterPro" id="IPR035595">
    <property type="entry name" value="UDP_glycos_trans_CS"/>
</dbReference>
<dbReference type="PANTHER" id="PTHR48048">
    <property type="entry name" value="GLYCOSYLTRANSFERASE"/>
    <property type="match status" value="1"/>
</dbReference>
<dbReference type="PANTHER" id="PTHR48048:SF45">
    <property type="entry name" value="GLYCOSYLTRANSFERASE"/>
    <property type="match status" value="1"/>
</dbReference>
<dbReference type="Pfam" id="PF00201">
    <property type="entry name" value="UDPGT"/>
    <property type="match status" value="1"/>
</dbReference>
<dbReference type="SUPFAM" id="SSF53756">
    <property type="entry name" value="UDP-Glycosyltransferase/glycogen phosphorylase"/>
    <property type="match status" value="1"/>
</dbReference>
<dbReference type="PROSITE" id="PS00375">
    <property type="entry name" value="UDPGT"/>
    <property type="match status" value="1"/>
</dbReference>
<accession>D3UAG0</accession>
<gene>
    <name evidence="3" type="primary">UGT71K1</name>
</gene>
<keyword id="KW-0328">Glycosyltransferase</keyword>
<keyword id="KW-0808">Transferase</keyword>
<sequence>MKKVELVFIPSPGAGHHLPTLQFVKRLIDRNDRISITILAIQSYFPTTLSSYTKSIAASEPRIRFIDVPQPQDRPPQEMYKSRAQIFSLYIESHVPSVKKIITNLVSSSANSSDSIRVAALVVDLFCVSMIDVAKELNIPSYLFLTSNAGYLAFMLHLPILHEKNQIAVEESDPDWSIPGIVHPVPPRVLPAALTDGRLSAYIKLASRFRETRGIIVNTFVELETHAITLFSNDDRVPPVYPVGPVIDLDDGQEHSNLDQAQRDKIIKWLDDQPQKSVVFLCFGSMGSFGAEQVKEIAVGLEQSGQRFLWSLRMPSPKGIVPSDCSNLEEVLPDGFLERTNGKKGLICGWAPQVEILAHSATGGFLSHCGWNSILESLWHGVPIATWPMYAEQQLNAFRMVRELGMALEMRLDYKAGSADVVGADEIEKAVVGVMEKDSEVRKKVEEMGKMARKAVKDGGSSFASVGRFIEDVIGQN</sequence>
<comment type="function">
    <text evidence="2">Glycosyltransferase that possesses chalcone and flavonol 2'-O-glycosyltransferase activity. Converts phloretin to phlorizin (phloretin 2'-O-glucoside), a potent antioxidant. Possesses glycosyltransferase activity toward quercetin, isoliquiritigenin, butein and caffeic acid.</text>
</comment>
<comment type="biophysicochemical properties">
    <phDependence>
        <text evidence="2">Optimum pH is 6.75.</text>
    </phDependence>
    <temperatureDependence>
        <text evidence="2">Optimum temperature is 40 degrees Celsius.</text>
    </temperatureDependence>
</comment>
<comment type="similarity">
    <text evidence="4">Belongs to the UDP-glycosyltransferase family.</text>
</comment>